<keyword id="KW-0010">Activator</keyword>
<keyword id="KW-0058">Aromatic hydrocarbons catabolism</keyword>
<keyword id="KW-0963">Cytoplasm</keyword>
<keyword id="KW-0238">DNA-binding</keyword>
<keyword id="KW-0804">Transcription</keyword>
<keyword id="KW-0805">Transcription regulation</keyword>
<comment type="function">
    <text>Positive regulator of the catBC operon that degrades catechol to acetyl-CoA. CatR binds in trans to the catR-catBC promoter-control region in the presence or absence of inducer but only activates the catBC operon in the presence of the inducer, cis-cis-muconate.</text>
</comment>
<comment type="subcellular location">
    <subcellularLocation>
        <location>Cytoplasm</location>
    </subcellularLocation>
</comment>
<comment type="similarity">
    <text evidence="2">Belongs to the LysR transcriptional regulatory family.</text>
</comment>
<gene>
    <name type="primary">catR</name>
</gene>
<dbReference type="EMBL" id="M33817">
    <property type="protein sequence ID" value="AAA25768.1"/>
    <property type="molecule type" value="Genomic_DNA"/>
</dbReference>
<dbReference type="PIR" id="A35118">
    <property type="entry name" value="A35118"/>
</dbReference>
<dbReference type="SMR" id="P20667"/>
<dbReference type="GO" id="GO:0005737">
    <property type="term" value="C:cytoplasm"/>
    <property type="evidence" value="ECO:0007669"/>
    <property type="project" value="UniProtKB-SubCell"/>
</dbReference>
<dbReference type="GO" id="GO:0032993">
    <property type="term" value="C:protein-DNA complex"/>
    <property type="evidence" value="ECO:0007669"/>
    <property type="project" value="TreeGrafter"/>
</dbReference>
<dbReference type="GO" id="GO:0003677">
    <property type="term" value="F:DNA binding"/>
    <property type="evidence" value="ECO:0007669"/>
    <property type="project" value="UniProtKB-KW"/>
</dbReference>
<dbReference type="GO" id="GO:0003700">
    <property type="term" value="F:DNA-binding transcription factor activity"/>
    <property type="evidence" value="ECO:0007669"/>
    <property type="project" value="InterPro"/>
</dbReference>
<dbReference type="GO" id="GO:0009056">
    <property type="term" value="P:catabolic process"/>
    <property type="evidence" value="ECO:0007669"/>
    <property type="project" value="UniProtKB-KW"/>
</dbReference>
<dbReference type="CDD" id="cd08445">
    <property type="entry name" value="PBP2_BenM_CatM_CatR"/>
    <property type="match status" value="1"/>
</dbReference>
<dbReference type="FunFam" id="1.10.10.10:FF:000001">
    <property type="entry name" value="LysR family transcriptional regulator"/>
    <property type="match status" value="1"/>
</dbReference>
<dbReference type="FunFam" id="3.40.190.10:FF:000352">
    <property type="entry name" value="LysR family transcriptional regulator"/>
    <property type="match status" value="1"/>
</dbReference>
<dbReference type="Gene3D" id="3.40.190.10">
    <property type="entry name" value="Periplasmic binding protein-like II"/>
    <property type="match status" value="2"/>
</dbReference>
<dbReference type="Gene3D" id="1.10.10.10">
    <property type="entry name" value="Winged helix-like DNA-binding domain superfamily/Winged helix DNA-binding domain"/>
    <property type="match status" value="1"/>
</dbReference>
<dbReference type="InterPro" id="IPR005119">
    <property type="entry name" value="LysR_subst-bd"/>
</dbReference>
<dbReference type="InterPro" id="IPR000847">
    <property type="entry name" value="Tscrpt_reg_HTH_LysR"/>
</dbReference>
<dbReference type="InterPro" id="IPR036388">
    <property type="entry name" value="WH-like_DNA-bd_sf"/>
</dbReference>
<dbReference type="InterPro" id="IPR036390">
    <property type="entry name" value="WH_DNA-bd_sf"/>
</dbReference>
<dbReference type="PANTHER" id="PTHR30346:SF17">
    <property type="entry name" value="LYSR FAMILY TRANSCRIPTIONAL REGULATOR"/>
    <property type="match status" value="1"/>
</dbReference>
<dbReference type="PANTHER" id="PTHR30346">
    <property type="entry name" value="TRANSCRIPTIONAL DUAL REGULATOR HCAR-RELATED"/>
    <property type="match status" value="1"/>
</dbReference>
<dbReference type="Pfam" id="PF00126">
    <property type="entry name" value="HTH_1"/>
    <property type="match status" value="1"/>
</dbReference>
<dbReference type="Pfam" id="PF03466">
    <property type="entry name" value="LysR_substrate"/>
    <property type="match status" value="1"/>
</dbReference>
<dbReference type="PRINTS" id="PR00039">
    <property type="entry name" value="HTHLYSR"/>
</dbReference>
<dbReference type="SUPFAM" id="SSF53850">
    <property type="entry name" value="Periplasmic binding protein-like II"/>
    <property type="match status" value="1"/>
</dbReference>
<dbReference type="SUPFAM" id="SSF46785">
    <property type="entry name" value="Winged helix' DNA-binding domain"/>
    <property type="match status" value="1"/>
</dbReference>
<dbReference type="PROSITE" id="PS50931">
    <property type="entry name" value="HTH_LYSR"/>
    <property type="match status" value="1"/>
</dbReference>
<evidence type="ECO:0000255" key="1">
    <source>
        <dbReference type="PROSITE-ProRule" id="PRU00253"/>
    </source>
</evidence>
<evidence type="ECO:0000305" key="2"/>
<name>CATR_PSEPU</name>
<sequence length="289" mass="32194">MELRHLRYFKVLAETLNFTRAAELLHIAQPPLSRQISQLEDQLGTLLVVRERPLRLTEAGRFFYEQSCTVLQLQNISDNTRRIGQGQRQWLGIGFAPSTLYKVLPELIRELRQDSELELGLNEMTTLQQVEALKSGRIDIAFGRIRIDDPAIHQQVLCEDPLVAVLPKDHPLASSPLTLAQLAGEAFILYPANPRPSYADHVLALFAHHGMSIHVSQWANELQTAIGLVAVGVGVTLVPASVQQQHRTDIEYVSLLDSGAVSPIILSRRKGDVSPIVQRCLTLIAQQAE</sequence>
<protein>
    <recommendedName>
        <fullName>HTH-type transcriptional regulator CatR</fullName>
    </recommendedName>
    <alternativeName>
        <fullName>CatBC operon transcriptional activator</fullName>
    </alternativeName>
</protein>
<proteinExistence type="inferred from homology"/>
<accession>P20667</accession>
<reference key="1">
    <citation type="journal article" date="1990" name="J. Bacteriol.">
        <title>Nucleotide sequencing and characterization of Pseudomonas putida catR: a positive regulator of the catBC operon is a member of the LysR family.</title>
        <authorList>
            <person name="Rothmel R.K."/>
            <person name="Aldrich T.L."/>
            <person name="Houghton J.E."/>
            <person name="Coco W.M."/>
            <person name="Ornston L.N."/>
            <person name="Chakrabarty A.M."/>
        </authorList>
    </citation>
    <scope>NUCLEOTIDE SEQUENCE [GENOMIC DNA]</scope>
</reference>
<organism>
    <name type="scientific">Pseudomonas putida</name>
    <name type="common">Arthrobacter siderocapsulatus</name>
    <dbReference type="NCBI Taxonomy" id="303"/>
    <lineage>
        <taxon>Bacteria</taxon>
        <taxon>Pseudomonadati</taxon>
        <taxon>Pseudomonadota</taxon>
        <taxon>Gammaproteobacteria</taxon>
        <taxon>Pseudomonadales</taxon>
        <taxon>Pseudomonadaceae</taxon>
        <taxon>Pseudomonas</taxon>
    </lineage>
</organism>
<feature type="chain" id="PRO_0000105601" description="HTH-type transcriptional regulator CatR">
    <location>
        <begin position="1"/>
        <end position="289"/>
    </location>
</feature>
<feature type="domain" description="HTH lysR-type" evidence="1">
    <location>
        <begin position="1"/>
        <end position="57"/>
    </location>
</feature>
<feature type="DNA-binding region" description="H-T-H motif" evidence="1">
    <location>
        <begin position="18"/>
        <end position="37"/>
    </location>
</feature>